<organism>
    <name type="scientific">Chromobacterium violaceum (strain ATCC 12472 / DSM 30191 / JCM 1249 / CCUG 213 / NBRC 12614 / NCIMB 9131 / NCTC 9757 / MK)</name>
    <dbReference type="NCBI Taxonomy" id="243365"/>
    <lineage>
        <taxon>Bacteria</taxon>
        <taxon>Pseudomonadati</taxon>
        <taxon>Pseudomonadota</taxon>
        <taxon>Betaproteobacteria</taxon>
        <taxon>Neisseriales</taxon>
        <taxon>Chromobacteriaceae</taxon>
        <taxon>Chromobacterium</taxon>
    </lineage>
</organism>
<name>NUOH_CHRVO</name>
<reference key="1">
    <citation type="journal article" date="2003" name="Proc. Natl. Acad. Sci. U.S.A.">
        <title>The complete genome sequence of Chromobacterium violaceum reveals remarkable and exploitable bacterial adaptability.</title>
        <authorList>
            <person name="Vasconcelos A.T.R."/>
            <person name="de Almeida D.F."/>
            <person name="Hungria M."/>
            <person name="Guimaraes C.T."/>
            <person name="Antonio R.V."/>
            <person name="Almeida F.C."/>
            <person name="de Almeida L.G.P."/>
            <person name="de Almeida R."/>
            <person name="Alves-Gomes J.A."/>
            <person name="Andrade E.M."/>
            <person name="Araripe J."/>
            <person name="de Araujo M.F.F."/>
            <person name="Astolfi-Filho S."/>
            <person name="Azevedo V."/>
            <person name="Baptista A.J."/>
            <person name="Bataus L.A.M."/>
            <person name="Batista J.S."/>
            <person name="Belo A."/>
            <person name="van den Berg C."/>
            <person name="Bogo M."/>
            <person name="Bonatto S."/>
            <person name="Bordignon J."/>
            <person name="Brigido M.M."/>
            <person name="Brito C.A."/>
            <person name="Brocchi M."/>
            <person name="Burity H.A."/>
            <person name="Camargo A.A."/>
            <person name="Cardoso D.D.P."/>
            <person name="Carneiro N.P."/>
            <person name="Carraro D.M."/>
            <person name="Carvalho C.M.B."/>
            <person name="Cascardo J.C.M."/>
            <person name="Cavada B.S."/>
            <person name="Chueire L.M.O."/>
            <person name="Creczynski-Pasa T.B."/>
            <person name="Cunha-Junior N.C."/>
            <person name="Fagundes N."/>
            <person name="Falcao C.L."/>
            <person name="Fantinatti F."/>
            <person name="Farias I.P."/>
            <person name="Felipe M.S.S."/>
            <person name="Ferrari L.P."/>
            <person name="Ferro J.A."/>
            <person name="Ferro M.I.T."/>
            <person name="Franco G.R."/>
            <person name="Freitas N.S.A."/>
            <person name="Furlan L.R."/>
            <person name="Gazzinelli R.T."/>
            <person name="Gomes E.A."/>
            <person name="Goncalves P.R."/>
            <person name="Grangeiro T.B."/>
            <person name="Grattapaglia D."/>
            <person name="Grisard E.C."/>
            <person name="Hanna E.S."/>
            <person name="Jardim S.N."/>
            <person name="Laurino J."/>
            <person name="Leoi L.C.T."/>
            <person name="Lima L.F.A."/>
            <person name="Loureiro M.F."/>
            <person name="Lyra M.C.C.P."/>
            <person name="Madeira H.M.F."/>
            <person name="Manfio G.P."/>
            <person name="Maranhao A.Q."/>
            <person name="Martins W.S."/>
            <person name="di Mauro S.M.Z."/>
            <person name="de Medeiros S.R.B."/>
            <person name="Meissner R.V."/>
            <person name="Moreira M.A.M."/>
            <person name="Nascimento F.F."/>
            <person name="Nicolas M.F."/>
            <person name="Oliveira J.G."/>
            <person name="Oliveira S.C."/>
            <person name="Paixao R.F.C."/>
            <person name="Parente J.A."/>
            <person name="Pedrosa F.O."/>
            <person name="Pena S.D.J."/>
            <person name="Pereira J.O."/>
            <person name="Pereira M."/>
            <person name="Pinto L.S.R.C."/>
            <person name="Pinto L.S."/>
            <person name="Porto J.I.R."/>
            <person name="Potrich D.P."/>
            <person name="Ramalho-Neto C.E."/>
            <person name="Reis A.M.M."/>
            <person name="Rigo L.U."/>
            <person name="Rondinelli E."/>
            <person name="Santos E.B.P."/>
            <person name="Santos F.R."/>
            <person name="Schneider M.P.C."/>
            <person name="Seuanez H.N."/>
            <person name="Silva A.M.R."/>
            <person name="da Silva A.L.C."/>
            <person name="Silva D.W."/>
            <person name="Silva R."/>
            <person name="Simoes I.C."/>
            <person name="Simon D."/>
            <person name="Soares C.M.A."/>
            <person name="Soares R.B.A."/>
            <person name="Souza E.M."/>
            <person name="Souza K.R.L."/>
            <person name="Souza R.C."/>
            <person name="Steffens M.B.R."/>
            <person name="Steindel M."/>
            <person name="Teixeira S.R."/>
            <person name="Urmenyi T."/>
            <person name="Vettore A."/>
            <person name="Wassem R."/>
            <person name="Zaha A."/>
            <person name="Simpson A.J.G."/>
        </authorList>
    </citation>
    <scope>NUCLEOTIDE SEQUENCE [LARGE SCALE GENOMIC DNA]</scope>
    <source>
        <strain>ATCC 12472 / DSM 30191 / JCM 1249 / CCUG 213 / NBRC 12614 / NCIMB 9131 / NCTC 9757 / MK</strain>
    </source>
</reference>
<comment type="function">
    <text evidence="1">NDH-1 shuttles electrons from NADH, via FMN and iron-sulfur (Fe-S) centers, to quinones in the respiratory chain. The immediate electron acceptor for the enzyme in this species is believed to be ubiquinone. Couples the redox reaction to proton translocation (for every two electrons transferred, four hydrogen ions are translocated across the cytoplasmic membrane), and thus conserves the redox energy in a proton gradient. This subunit may bind ubiquinone.</text>
</comment>
<comment type="catalytic activity">
    <reaction evidence="1">
        <text>a quinone + NADH + 5 H(+)(in) = a quinol + NAD(+) + 4 H(+)(out)</text>
        <dbReference type="Rhea" id="RHEA:57888"/>
        <dbReference type="ChEBI" id="CHEBI:15378"/>
        <dbReference type="ChEBI" id="CHEBI:24646"/>
        <dbReference type="ChEBI" id="CHEBI:57540"/>
        <dbReference type="ChEBI" id="CHEBI:57945"/>
        <dbReference type="ChEBI" id="CHEBI:132124"/>
    </reaction>
</comment>
<comment type="subunit">
    <text evidence="1">NDH-1 is composed of 14 different subunits. Subunits NuoA, H, J, K, L, M, N constitute the membrane sector of the complex.</text>
</comment>
<comment type="subcellular location">
    <subcellularLocation>
        <location evidence="1">Cell inner membrane</location>
        <topology evidence="1">Multi-pass membrane protein</topology>
    </subcellularLocation>
</comment>
<comment type="similarity">
    <text evidence="1">Belongs to the complex I subunit 1 family.</text>
</comment>
<accession>Q7NZH4</accession>
<sequence length="349" mass="38076">MEFLQGILGTDAGLLVWTLLKIIAIVLPMLGCVAYLTLAERKVIGYMQIRIGPNRVGPFGLLQPIADAVKLLMKEIILPTNSSKGLFLLAPVLSIGPALAAWAVIPFTDKLVLANVNASLLYILALTSMGVYGVIIAGWAGNSKYSFLGAMRSAAQIVSYELAMGFALVGVLMVSGSLNLVDIVHQQSFGKGGGSILSWNWIPLFPLFIVYLISGVAETNRAPFDVAEGESEIVAGFHVEYSGMAFAIFFLAEYANMILVAALTSLLFLGGWLSPFPASWGILGAGGFFWLAVKMALVLFCFLWFRATFPRYRYDQIMRLGWKVFIPVTLVWILVVGAWMFSPLSIWKL</sequence>
<dbReference type="EC" id="7.1.1.-" evidence="1"/>
<dbReference type="EMBL" id="AE016825">
    <property type="protein sequence ID" value="AAQ58622.1"/>
    <property type="molecule type" value="Genomic_DNA"/>
</dbReference>
<dbReference type="RefSeq" id="WP_011134503.1">
    <property type="nucleotide sequence ID" value="NC_005085.1"/>
</dbReference>
<dbReference type="SMR" id="Q7NZH4"/>
<dbReference type="STRING" id="243365.CV_0948"/>
<dbReference type="GeneID" id="66366638"/>
<dbReference type="KEGG" id="cvi:CV_0948"/>
<dbReference type="eggNOG" id="COG1005">
    <property type="taxonomic scope" value="Bacteria"/>
</dbReference>
<dbReference type="HOGENOM" id="CLU_015134_0_1_4"/>
<dbReference type="OrthoDB" id="9803734at2"/>
<dbReference type="Proteomes" id="UP000001424">
    <property type="component" value="Chromosome"/>
</dbReference>
<dbReference type="GO" id="GO:0005886">
    <property type="term" value="C:plasma membrane"/>
    <property type="evidence" value="ECO:0007669"/>
    <property type="project" value="UniProtKB-SubCell"/>
</dbReference>
<dbReference type="GO" id="GO:0003954">
    <property type="term" value="F:NADH dehydrogenase activity"/>
    <property type="evidence" value="ECO:0007669"/>
    <property type="project" value="TreeGrafter"/>
</dbReference>
<dbReference type="GO" id="GO:0016655">
    <property type="term" value="F:oxidoreductase activity, acting on NAD(P)H, quinone or similar compound as acceptor"/>
    <property type="evidence" value="ECO:0007669"/>
    <property type="project" value="UniProtKB-UniRule"/>
</dbReference>
<dbReference type="GO" id="GO:0048038">
    <property type="term" value="F:quinone binding"/>
    <property type="evidence" value="ECO:0007669"/>
    <property type="project" value="UniProtKB-KW"/>
</dbReference>
<dbReference type="GO" id="GO:0009060">
    <property type="term" value="P:aerobic respiration"/>
    <property type="evidence" value="ECO:0007669"/>
    <property type="project" value="TreeGrafter"/>
</dbReference>
<dbReference type="HAMAP" id="MF_01350">
    <property type="entry name" value="NDH1_NuoH"/>
    <property type="match status" value="1"/>
</dbReference>
<dbReference type="InterPro" id="IPR001694">
    <property type="entry name" value="NADH_UbQ_OxRdtase_su1/FPO"/>
</dbReference>
<dbReference type="InterPro" id="IPR018086">
    <property type="entry name" value="NADH_UbQ_OxRdtase_su1_CS"/>
</dbReference>
<dbReference type="NCBIfam" id="NF004741">
    <property type="entry name" value="PRK06076.1-2"/>
    <property type="match status" value="1"/>
</dbReference>
<dbReference type="NCBIfam" id="NF004742">
    <property type="entry name" value="PRK06076.1-3"/>
    <property type="match status" value="1"/>
</dbReference>
<dbReference type="PANTHER" id="PTHR11432">
    <property type="entry name" value="NADH DEHYDROGENASE SUBUNIT 1"/>
    <property type="match status" value="1"/>
</dbReference>
<dbReference type="PANTHER" id="PTHR11432:SF3">
    <property type="entry name" value="NADH-UBIQUINONE OXIDOREDUCTASE CHAIN 1"/>
    <property type="match status" value="1"/>
</dbReference>
<dbReference type="Pfam" id="PF00146">
    <property type="entry name" value="NADHdh"/>
    <property type="match status" value="1"/>
</dbReference>
<dbReference type="PROSITE" id="PS00667">
    <property type="entry name" value="COMPLEX1_ND1_1"/>
    <property type="match status" value="1"/>
</dbReference>
<dbReference type="PROSITE" id="PS00668">
    <property type="entry name" value="COMPLEX1_ND1_2"/>
    <property type="match status" value="1"/>
</dbReference>
<gene>
    <name evidence="1" type="primary">nuoH</name>
    <name type="ordered locus">CV_0948</name>
</gene>
<feature type="chain" id="PRO_0000240066" description="NADH-quinone oxidoreductase subunit H">
    <location>
        <begin position="1"/>
        <end position="349"/>
    </location>
</feature>
<feature type="transmembrane region" description="Helical" evidence="1">
    <location>
        <begin position="14"/>
        <end position="34"/>
    </location>
</feature>
<feature type="transmembrane region" description="Helical" evidence="1">
    <location>
        <begin position="85"/>
        <end position="105"/>
    </location>
</feature>
<feature type="transmembrane region" description="Helical" evidence="1">
    <location>
        <begin position="120"/>
        <end position="140"/>
    </location>
</feature>
<feature type="transmembrane region" description="Helical" evidence="1">
    <location>
        <begin position="164"/>
        <end position="184"/>
    </location>
</feature>
<feature type="transmembrane region" description="Helical" evidence="1">
    <location>
        <begin position="196"/>
        <end position="216"/>
    </location>
</feature>
<feature type="transmembrane region" description="Helical" evidence="1">
    <location>
        <begin position="243"/>
        <end position="263"/>
    </location>
</feature>
<feature type="transmembrane region" description="Helical" evidence="1">
    <location>
        <begin position="285"/>
        <end position="305"/>
    </location>
</feature>
<feature type="transmembrane region" description="Helical" evidence="1">
    <location>
        <begin position="324"/>
        <end position="344"/>
    </location>
</feature>
<proteinExistence type="inferred from homology"/>
<evidence type="ECO:0000255" key="1">
    <source>
        <dbReference type="HAMAP-Rule" id="MF_01350"/>
    </source>
</evidence>
<keyword id="KW-0997">Cell inner membrane</keyword>
<keyword id="KW-1003">Cell membrane</keyword>
<keyword id="KW-0472">Membrane</keyword>
<keyword id="KW-0520">NAD</keyword>
<keyword id="KW-0874">Quinone</keyword>
<keyword id="KW-1185">Reference proteome</keyword>
<keyword id="KW-1278">Translocase</keyword>
<keyword id="KW-0812">Transmembrane</keyword>
<keyword id="KW-1133">Transmembrane helix</keyword>
<keyword id="KW-0830">Ubiquinone</keyword>
<protein>
    <recommendedName>
        <fullName evidence="1">NADH-quinone oxidoreductase subunit H</fullName>
        <ecNumber evidence="1">7.1.1.-</ecNumber>
    </recommendedName>
    <alternativeName>
        <fullName evidence="1">NADH dehydrogenase I subunit H</fullName>
    </alternativeName>
    <alternativeName>
        <fullName evidence="1">NDH-1 subunit H</fullName>
    </alternativeName>
</protein>